<protein>
    <recommendedName>
        <fullName>Potassium channel toxin alpha-KTx 1.5</fullName>
    </recommendedName>
    <alternativeName>
        <fullName evidence="5">BmTX1</fullName>
    </alternativeName>
    <alternativeName>
        <fullName evidence="8">Neurotoxin TX1</fullName>
    </alternativeName>
</protein>
<accession>Q9NII6</accession>
<name>KAX15_OLIMR</name>
<feature type="signal peptide" evidence="3">
    <location>
        <begin position="1"/>
        <end position="20"/>
    </location>
</feature>
<feature type="chain" id="PRO_0000035317" description="Potassium channel toxin alpha-KTx 1.5" evidence="3">
    <location>
        <begin position="21"/>
        <end position="57"/>
    </location>
</feature>
<feature type="site" description="Basic residue of the functional dyad" evidence="1">
    <location>
        <position position="47"/>
    </location>
</feature>
<feature type="site" description="Aromatic residue of the functional dyad" evidence="1">
    <location>
        <position position="56"/>
    </location>
</feature>
<feature type="modified residue" description="Pyrrolidone carboxylic acid" evidence="3">
    <location>
        <position position="21"/>
    </location>
</feature>
<feature type="disulfide bond" evidence="2 4 9 10">
    <location>
        <begin position="27"/>
        <end position="48"/>
    </location>
</feature>
<feature type="disulfide bond" evidence="2 4 9 10">
    <location>
        <begin position="33"/>
        <end position="53"/>
    </location>
</feature>
<feature type="disulfide bond" evidence="2 4 9 10">
    <location>
        <begin position="37"/>
        <end position="55"/>
    </location>
</feature>
<feature type="strand" evidence="11">
    <location>
        <begin position="21"/>
        <end position="26"/>
    </location>
</feature>
<feature type="helix" evidence="11">
    <location>
        <begin position="30"/>
        <end position="32"/>
    </location>
</feature>
<feature type="helix" evidence="11">
    <location>
        <begin position="33"/>
        <end position="41"/>
    </location>
</feature>
<feature type="strand" evidence="11">
    <location>
        <begin position="46"/>
        <end position="49"/>
    </location>
</feature>
<feature type="strand" evidence="11">
    <location>
        <begin position="52"/>
        <end position="55"/>
    </location>
</feature>
<keyword id="KW-0002">3D-structure</keyword>
<keyword id="KW-1221">Calcium-activated potassium channel impairing toxin</keyword>
<keyword id="KW-0903">Direct protein sequencing</keyword>
<keyword id="KW-1015">Disulfide bond</keyword>
<keyword id="KW-0872">Ion channel impairing toxin</keyword>
<keyword id="KW-0528">Neurotoxin</keyword>
<keyword id="KW-0632">Potassium channel impairing toxin</keyword>
<keyword id="KW-0873">Pyrrolidone carboxylic acid</keyword>
<keyword id="KW-0964">Secreted</keyword>
<keyword id="KW-0732">Signal</keyword>
<keyword id="KW-0800">Toxin</keyword>
<keyword id="KW-1220">Voltage-gated potassium channel impairing toxin</keyword>
<evidence type="ECO:0000250" key="1"/>
<evidence type="ECO:0000269" key="2">
    <source>
    </source>
</evidence>
<evidence type="ECO:0000269" key="3">
    <source>
    </source>
</evidence>
<evidence type="ECO:0000269" key="4">
    <source>
    </source>
</evidence>
<evidence type="ECO:0000303" key="5">
    <source>
    </source>
</evidence>
<evidence type="ECO:0000305" key="6"/>
<evidence type="ECO:0000305" key="7">
    <source>
    </source>
</evidence>
<evidence type="ECO:0000312" key="8">
    <source>
        <dbReference type="EMBL" id="AAF63971.1"/>
    </source>
</evidence>
<evidence type="ECO:0000312" key="9">
    <source>
        <dbReference type="PDB" id="1BIG"/>
    </source>
</evidence>
<evidence type="ECO:0000312" key="10">
    <source>
        <dbReference type="PDB" id="6AVC"/>
    </source>
</evidence>
<evidence type="ECO:0007829" key="11">
    <source>
        <dbReference type="PDB" id="6AVC"/>
    </source>
</evidence>
<dbReference type="EMBL" id="AF208299">
    <property type="protein sequence ID" value="AAF63971.1"/>
    <property type="molecule type" value="Genomic_DNA"/>
</dbReference>
<dbReference type="PDB" id="1BIG">
    <property type="method" value="NMR"/>
    <property type="chains" value="A=22-57"/>
</dbReference>
<dbReference type="PDB" id="6AVC">
    <property type="method" value="X-ray"/>
    <property type="resolution" value="1.88 A"/>
    <property type="chains" value="A=21-57"/>
</dbReference>
<dbReference type="PDBsum" id="1BIG"/>
<dbReference type="PDBsum" id="6AVC"/>
<dbReference type="BMRB" id="Q9NII6"/>
<dbReference type="SMR" id="Q9NII6"/>
<dbReference type="EvolutionaryTrace" id="Q9NII6"/>
<dbReference type="GO" id="GO:0005576">
    <property type="term" value="C:extracellular region"/>
    <property type="evidence" value="ECO:0007669"/>
    <property type="project" value="UniProtKB-SubCell"/>
</dbReference>
<dbReference type="GO" id="GO:0008200">
    <property type="term" value="F:ion channel inhibitor activity"/>
    <property type="evidence" value="ECO:0007669"/>
    <property type="project" value="InterPro"/>
</dbReference>
<dbReference type="GO" id="GO:0015459">
    <property type="term" value="F:potassium channel regulator activity"/>
    <property type="evidence" value="ECO:0007669"/>
    <property type="project" value="UniProtKB-KW"/>
</dbReference>
<dbReference type="GO" id="GO:0090729">
    <property type="term" value="F:toxin activity"/>
    <property type="evidence" value="ECO:0007669"/>
    <property type="project" value="UniProtKB-KW"/>
</dbReference>
<dbReference type="FunFam" id="3.30.30.10:FF:000009">
    <property type="entry name" value="Potassium channel toxin alpha-KTx 4.3"/>
    <property type="match status" value="1"/>
</dbReference>
<dbReference type="Gene3D" id="3.30.30.10">
    <property type="entry name" value="Knottin, scorpion toxin-like"/>
    <property type="match status" value="1"/>
</dbReference>
<dbReference type="InterPro" id="IPR036574">
    <property type="entry name" value="Scorpion_toxin-like_sf"/>
</dbReference>
<dbReference type="InterPro" id="IPR001947">
    <property type="entry name" value="Scorpion_toxinS_K_inh"/>
</dbReference>
<dbReference type="Pfam" id="PF00451">
    <property type="entry name" value="Toxin_2"/>
    <property type="match status" value="1"/>
</dbReference>
<dbReference type="PRINTS" id="PR00286">
    <property type="entry name" value="CHARYBDTOXIN"/>
</dbReference>
<dbReference type="SUPFAM" id="SSF57095">
    <property type="entry name" value="Scorpion toxin-like"/>
    <property type="match status" value="1"/>
</dbReference>
<dbReference type="PROSITE" id="PS01138">
    <property type="entry name" value="SCORP_SHORT_TOXIN"/>
    <property type="match status" value="1"/>
</dbReference>
<proteinExistence type="evidence at protein level"/>
<sequence>MKISFLLLALVICSIGWSEAQFTDVKCTGSKQCWPVCKQMFGKPNGKCMNGKCRCYS</sequence>
<organism>
    <name type="scientific">Olivierus martensii</name>
    <name type="common">Manchurian scorpion</name>
    <name type="synonym">Mesobuthus martensii</name>
    <dbReference type="NCBI Taxonomy" id="34649"/>
    <lineage>
        <taxon>Eukaryota</taxon>
        <taxon>Metazoa</taxon>
        <taxon>Ecdysozoa</taxon>
        <taxon>Arthropoda</taxon>
        <taxon>Chelicerata</taxon>
        <taxon>Arachnida</taxon>
        <taxon>Scorpiones</taxon>
        <taxon>Buthida</taxon>
        <taxon>Buthoidea</taxon>
        <taxon>Buthidae</taxon>
        <taxon>Olivierus</taxon>
    </lineage>
</organism>
<comment type="function">
    <text evidence="2 3">Potent blocker of both large-conductance calcium-activated potassium channels (KCa1.1/KCNMA1) and voltage-gated potassium channels (Kv1.3/KCNA3) (PubMed:29483648, PubMed:9354615). Has also been shown to moderately inhibit Kv1.2/KCNA2 and weakly inhibit Kv1.1/KCNA1 channels, as well as 5-hydroxytryptamine 3 receptors (HTR3A) (PubMed:29483648).</text>
</comment>
<comment type="subcellular location">
    <subcellularLocation>
        <location evidence="3">Secreted</location>
    </subcellularLocation>
</comment>
<comment type="tissue specificity">
    <text evidence="7">Expressed by the venom gland.</text>
</comment>
<comment type="domain">
    <text>Has the structural arrangement of an alpha-helix connected to a beta-sheet by disulfide bonds (CSalpha/beta).</text>
</comment>
<comment type="similarity">
    <text evidence="6">Belongs to the short scorpion toxin superfamily. Potassium channel inhibitor family. Alpha-KTx 01 subfamily.</text>
</comment>
<reference key="1">
    <citation type="journal article" date="2000" name="Biochem. J.">
        <title>Genomic organization of three novel toxins from the scorpion Buthus martensi Karsch that are active on potassium channels.</title>
        <authorList>
            <person name="Dai L."/>
            <person name="Wu J.-J."/>
            <person name="Gu Y.-H."/>
            <person name="Lan Z.-D."/>
            <person name="Ling M.-H."/>
            <person name="Chi C.-W."/>
        </authorList>
    </citation>
    <scope>NUCLEOTIDE SEQUENCE [GENOMIC DNA]</scope>
</reference>
<reference key="2">
    <citation type="journal article" date="1997" name="Biochemistry">
        <title>Purification, characterization, and synthesis of three novel toxins from the Chinese scorpion Buthus martensi, which act on K+ channels.</title>
        <authorList>
            <person name="Romi-Lebrun R."/>
            <person name="Lebrun B."/>
            <person name="Martin-Eauclaire M.-F."/>
            <person name="Ishiguro M."/>
            <person name="Escoubas P."/>
            <person name="Wu F.Q."/>
            <person name="Hisada M."/>
            <person name="Pongs O."/>
            <person name="Nakajima T."/>
        </authorList>
    </citation>
    <scope>PROTEIN SEQUENCE OF 21-57</scope>
    <scope>SYNTHESIS OF 21-57</scope>
    <scope>FUNCTION</scope>
    <scope>ACTIVITY PROFILE</scope>
    <scope>SUBCELLULAR LOCATION</scope>
    <scope>PYROGLUTAMATE FORMATION AT GLN-21</scope>
    <source>
        <tissue>Venom</tissue>
    </source>
</reference>
<reference key="3">
    <citation type="journal article" date="1998" name="Biochemistry">
        <title>Solution structure of two new toxins from the venom of the Chinese scorpion Buthus martensi Karsch blockers of potassium channels.</title>
        <authorList>
            <person name="Blanc E."/>
            <person name="Romi-Lebrun R."/>
            <person name="Bornet O."/>
            <person name="Nakajima T."/>
            <person name="Darbon H."/>
        </authorList>
    </citation>
    <scope>STRUCTURE BY NMR OF 21-57</scope>
    <scope>DISULFIDE BONDS</scope>
</reference>
<reference key="4">
    <citation type="journal article" date="2018" name="Nat. Struct. Mol. Biol.">
        <title>Screening, large-scale production and structure-based classification of cystine-dense peptides.</title>
        <authorList>
            <person name="Correnti C.E."/>
            <person name="Gewe M.M."/>
            <person name="Mehlin C."/>
            <person name="Bandaranayake A.D."/>
            <person name="Johnsen W.A."/>
            <person name="Rupert P.B."/>
            <person name="Brusniak M.Y."/>
            <person name="Clarke M."/>
            <person name="Burke S.E."/>
            <person name="De Van Der Schueren W."/>
            <person name="Pilat K."/>
            <person name="Turnbaugh S.M."/>
            <person name="May D."/>
            <person name="Watson A."/>
            <person name="Chan M.K."/>
            <person name="Bahl C.D."/>
            <person name="Olson J.M."/>
            <person name="Strong R.K."/>
        </authorList>
    </citation>
    <scope>X-RAY CRYSTALLOGRAPHY (1.88 ANGSTROMS) OF 21-57</scope>
    <scope>FUNCTION</scope>
    <scope>SYNTHESIS OF 21-57</scope>
    <scope>DISULFIDE BONDS</scope>
</reference>